<comment type="function">
    <text evidence="1">Could be a nuclease involved in processing of the 5'-end of pre-16S rRNA.</text>
</comment>
<comment type="subcellular location">
    <subcellularLocation>
        <location evidence="1">Cytoplasm</location>
    </subcellularLocation>
</comment>
<comment type="similarity">
    <text evidence="1">Belongs to the YqgF nuclease family.</text>
</comment>
<keyword id="KW-0963">Cytoplasm</keyword>
<keyword id="KW-0378">Hydrolase</keyword>
<keyword id="KW-0540">Nuclease</keyword>
<keyword id="KW-1185">Reference proteome</keyword>
<keyword id="KW-0690">Ribosome biogenesis</keyword>
<reference key="1">
    <citation type="journal article" date="2002" name="DNA Res.">
        <title>Complete genome structure of the thermophilic cyanobacterium Thermosynechococcus elongatus BP-1.</title>
        <authorList>
            <person name="Nakamura Y."/>
            <person name="Kaneko T."/>
            <person name="Sato S."/>
            <person name="Ikeuchi M."/>
            <person name="Katoh H."/>
            <person name="Sasamoto S."/>
            <person name="Watanabe A."/>
            <person name="Iriguchi M."/>
            <person name="Kawashima K."/>
            <person name="Kimura T."/>
            <person name="Kishida Y."/>
            <person name="Kiyokawa C."/>
            <person name="Kohara M."/>
            <person name="Matsumoto M."/>
            <person name="Matsuno A."/>
            <person name="Nakazaki N."/>
            <person name="Shimpo S."/>
            <person name="Sugimoto M."/>
            <person name="Takeuchi C."/>
            <person name="Yamada M."/>
            <person name="Tabata S."/>
        </authorList>
    </citation>
    <scope>NUCLEOTIDE SEQUENCE [LARGE SCALE GENOMIC DNA]</scope>
    <source>
        <strain>NIES-2133 / IAM M-273 / BP-1</strain>
    </source>
</reference>
<evidence type="ECO:0000255" key="1">
    <source>
        <dbReference type="HAMAP-Rule" id="MF_00651"/>
    </source>
</evidence>
<feature type="chain" id="PRO_0000172158" description="Putative pre-16S rRNA nuclease">
    <location>
        <begin position="1"/>
        <end position="151"/>
    </location>
</feature>
<protein>
    <recommendedName>
        <fullName evidence="1">Putative pre-16S rRNA nuclease</fullName>
        <ecNumber evidence="1">3.1.-.-</ecNumber>
    </recommendedName>
</protein>
<dbReference type="EC" id="3.1.-.-" evidence="1"/>
<dbReference type="EMBL" id="BA000039">
    <property type="protein sequence ID" value="BAC09881.1"/>
    <property type="molecule type" value="Genomic_DNA"/>
</dbReference>
<dbReference type="RefSeq" id="NP_683119.1">
    <property type="nucleotide sequence ID" value="NC_004113.1"/>
</dbReference>
<dbReference type="RefSeq" id="WP_011058162.1">
    <property type="nucleotide sequence ID" value="NC_004113.1"/>
</dbReference>
<dbReference type="SMR" id="Q8DGI8"/>
<dbReference type="STRING" id="197221.gene:10748948"/>
<dbReference type="EnsemblBacteria" id="BAC09881">
    <property type="protein sequence ID" value="BAC09881"/>
    <property type="gene ID" value="BAC09881"/>
</dbReference>
<dbReference type="KEGG" id="tel:tll2329"/>
<dbReference type="PATRIC" id="fig|197221.4.peg.2441"/>
<dbReference type="eggNOG" id="COG0816">
    <property type="taxonomic scope" value="Bacteria"/>
</dbReference>
<dbReference type="Proteomes" id="UP000000440">
    <property type="component" value="Chromosome"/>
</dbReference>
<dbReference type="GO" id="GO:0005829">
    <property type="term" value="C:cytosol"/>
    <property type="evidence" value="ECO:0007669"/>
    <property type="project" value="TreeGrafter"/>
</dbReference>
<dbReference type="GO" id="GO:0004518">
    <property type="term" value="F:nuclease activity"/>
    <property type="evidence" value="ECO:0007669"/>
    <property type="project" value="UniProtKB-KW"/>
</dbReference>
<dbReference type="GO" id="GO:0000967">
    <property type="term" value="P:rRNA 5'-end processing"/>
    <property type="evidence" value="ECO:0007669"/>
    <property type="project" value="UniProtKB-UniRule"/>
</dbReference>
<dbReference type="CDD" id="cd16964">
    <property type="entry name" value="YqgF"/>
    <property type="match status" value="1"/>
</dbReference>
<dbReference type="Gene3D" id="3.30.420.140">
    <property type="entry name" value="YqgF/RNase H-like domain"/>
    <property type="match status" value="1"/>
</dbReference>
<dbReference type="HAMAP" id="MF_00651">
    <property type="entry name" value="Nuclease_YqgF"/>
    <property type="match status" value="1"/>
</dbReference>
<dbReference type="InterPro" id="IPR012337">
    <property type="entry name" value="RNaseH-like_sf"/>
</dbReference>
<dbReference type="InterPro" id="IPR005227">
    <property type="entry name" value="YqgF"/>
</dbReference>
<dbReference type="InterPro" id="IPR006641">
    <property type="entry name" value="YqgF/RNaseH-like_dom"/>
</dbReference>
<dbReference type="InterPro" id="IPR037027">
    <property type="entry name" value="YqgF/RNaseH-like_dom_sf"/>
</dbReference>
<dbReference type="NCBIfam" id="TIGR00250">
    <property type="entry name" value="RNAse_H_YqgF"/>
    <property type="match status" value="1"/>
</dbReference>
<dbReference type="PANTHER" id="PTHR33317">
    <property type="entry name" value="POLYNUCLEOTIDYL TRANSFERASE, RIBONUCLEASE H-LIKE SUPERFAMILY PROTEIN"/>
    <property type="match status" value="1"/>
</dbReference>
<dbReference type="PANTHER" id="PTHR33317:SF4">
    <property type="entry name" value="POLYNUCLEOTIDYL TRANSFERASE, RIBONUCLEASE H-LIKE SUPERFAMILY PROTEIN"/>
    <property type="match status" value="1"/>
</dbReference>
<dbReference type="Pfam" id="PF03652">
    <property type="entry name" value="RuvX"/>
    <property type="match status" value="1"/>
</dbReference>
<dbReference type="SMART" id="SM00732">
    <property type="entry name" value="YqgFc"/>
    <property type="match status" value="1"/>
</dbReference>
<dbReference type="SUPFAM" id="SSF53098">
    <property type="entry name" value="Ribonuclease H-like"/>
    <property type="match status" value="1"/>
</dbReference>
<proteinExistence type="inferred from homology"/>
<gene>
    <name type="ordered locus">tll2329</name>
</gene>
<sequence>MISVLGLDLGRKRIGVAGCDRLGQLATGITTIYRRNFASDVAQLRRICQERGVEKLIVGLPYTLDGQLGSQARQVQHLAEKIGAALNLPVEYIDERLTSFQAEEILKQRRRSPRHHKDLVDQIAAALILQQWLDARSQTAKATLAAGDPQL</sequence>
<organism>
    <name type="scientific">Thermosynechococcus vestitus (strain NIES-2133 / IAM M-273 / BP-1)</name>
    <dbReference type="NCBI Taxonomy" id="197221"/>
    <lineage>
        <taxon>Bacteria</taxon>
        <taxon>Bacillati</taxon>
        <taxon>Cyanobacteriota</taxon>
        <taxon>Cyanophyceae</taxon>
        <taxon>Acaryochloridales</taxon>
        <taxon>Thermosynechococcaceae</taxon>
        <taxon>Thermosynechococcus</taxon>
    </lineage>
</organism>
<name>YQGF_THEVB</name>
<accession>Q8DGI8</accession>